<proteinExistence type="evidence at protein level"/>
<gene>
    <name type="primary">Esrrg</name>
    <name type="synonym">Err3</name>
    <name type="synonym">Kiaa0832</name>
    <name type="synonym">Nr3b3</name>
</gene>
<protein>
    <recommendedName>
        <fullName>Estrogen-related receptor gamma</fullName>
    </recommendedName>
    <alternativeName>
        <fullName>Estrogen receptor-related protein 3</fullName>
    </alternativeName>
    <alternativeName>
        <fullName>Nuclear receptor subfamily 3 group B member 3</fullName>
    </alternativeName>
</protein>
<keyword id="KW-0002">3D-structure</keyword>
<keyword id="KW-0007">Acetylation</keyword>
<keyword id="KW-0010">Activator</keyword>
<keyword id="KW-0025">Alternative splicing</keyword>
<keyword id="KW-0238">DNA-binding</keyword>
<keyword id="KW-1017">Isopeptide bond</keyword>
<keyword id="KW-0479">Metal-binding</keyword>
<keyword id="KW-0539">Nucleus</keyword>
<keyword id="KW-0597">Phosphoprotein</keyword>
<keyword id="KW-0675">Receptor</keyword>
<keyword id="KW-1185">Reference proteome</keyword>
<keyword id="KW-0804">Transcription</keyword>
<keyword id="KW-0805">Transcription regulation</keyword>
<keyword id="KW-0832">Ubl conjugation</keyword>
<keyword id="KW-0862">Zinc</keyword>
<keyword id="KW-0863">Zinc-finger</keyword>
<organism>
    <name type="scientific">Mus musculus</name>
    <name type="common">Mouse</name>
    <dbReference type="NCBI Taxonomy" id="10090"/>
    <lineage>
        <taxon>Eukaryota</taxon>
        <taxon>Metazoa</taxon>
        <taxon>Chordata</taxon>
        <taxon>Craniata</taxon>
        <taxon>Vertebrata</taxon>
        <taxon>Euteleostomi</taxon>
        <taxon>Mammalia</taxon>
        <taxon>Eutheria</taxon>
        <taxon>Euarchontoglires</taxon>
        <taxon>Glires</taxon>
        <taxon>Rodentia</taxon>
        <taxon>Myomorpha</taxon>
        <taxon>Muroidea</taxon>
        <taxon>Muridae</taxon>
        <taxon>Murinae</taxon>
        <taxon>Mus</taxon>
        <taxon>Mus</taxon>
    </lineage>
</organism>
<feature type="chain" id="PRO_0000053666" description="Estrogen-related receptor gamma">
    <location>
        <begin position="1"/>
        <end position="458"/>
    </location>
</feature>
<feature type="domain" description="NR LBD" evidence="3">
    <location>
        <begin position="233"/>
        <end position="457"/>
    </location>
</feature>
<feature type="DNA-binding region" description="Nuclear receptor" evidence="2">
    <location>
        <begin position="125"/>
        <end position="200"/>
    </location>
</feature>
<feature type="zinc finger region" description="NR C4-type" evidence="2">
    <location>
        <begin position="128"/>
        <end position="148"/>
    </location>
</feature>
<feature type="zinc finger region" description="NR C4-type" evidence="2">
    <location>
        <begin position="164"/>
        <end position="188"/>
    </location>
</feature>
<feature type="region of interest" description="Disordered" evidence="4">
    <location>
        <begin position="42"/>
        <end position="85"/>
    </location>
</feature>
<feature type="compositionally biased region" description="Polar residues" evidence="4">
    <location>
        <begin position="42"/>
        <end position="52"/>
    </location>
</feature>
<feature type="compositionally biased region" description="Low complexity" evidence="4">
    <location>
        <begin position="57"/>
        <end position="70"/>
    </location>
</feature>
<feature type="modified residue" description="Phosphoserine" evidence="10">
    <location>
        <position position="45"/>
    </location>
</feature>
<feature type="cross-link" description="Glycyl lysine isopeptide (Lys-Gly) (interchain with G-Cter in SUMO)" evidence="1">
    <location>
        <position position="40"/>
    </location>
</feature>
<feature type="splice variant" id="VSP_010766" description="In isoform 2." evidence="8 9">
    <location>
        <begin position="1"/>
        <end position="23"/>
    </location>
</feature>
<feature type="mutagenesis site" description="Loss of transcriptional activation; when associated with A-450." evidence="5">
    <original>L</original>
    <variation>A</variation>
    <location>
        <position position="449"/>
    </location>
</feature>
<feature type="mutagenesis site" description="Loss of transcriptional activation; when associated with A-449." evidence="5">
    <original>F</original>
    <variation>A</variation>
    <location>
        <position position="450"/>
    </location>
</feature>
<feature type="mutagenesis site" description="Loss of transcriptional activation; when associated with A-454." evidence="5">
    <original>M</original>
    <variation>A</variation>
    <location>
        <position position="453"/>
    </location>
</feature>
<feature type="mutagenesis site" description="Loss of transcriptional activation; when associated with A-453." evidence="5">
    <original>L</original>
    <variation>A</variation>
    <location>
        <position position="454"/>
    </location>
</feature>
<feature type="sequence conflict" description="In Ref. 2; BAC41450." evidence="10" ref="2">
    <original>K</original>
    <variation>N</variation>
    <location>
        <position position="153"/>
    </location>
</feature>
<feature type="helix" evidence="11">
    <location>
        <begin position="236"/>
        <end position="243"/>
    </location>
</feature>
<feature type="helix" evidence="11">
    <location>
        <begin position="261"/>
        <end position="283"/>
    </location>
</feature>
<feature type="turn" evidence="11">
    <location>
        <begin position="287"/>
        <end position="291"/>
    </location>
</feature>
<feature type="helix" evidence="11">
    <location>
        <begin position="294"/>
        <end position="316"/>
    </location>
</feature>
<feature type="turn" evidence="11">
    <location>
        <begin position="317"/>
        <end position="319"/>
    </location>
</feature>
<feature type="strand" evidence="11">
    <location>
        <begin position="320"/>
        <end position="322"/>
    </location>
</feature>
<feature type="strand" evidence="11">
    <location>
        <begin position="324"/>
        <end position="327"/>
    </location>
</feature>
<feature type="strand" evidence="11">
    <location>
        <begin position="330"/>
        <end position="332"/>
    </location>
</feature>
<feature type="helix" evidence="11">
    <location>
        <begin position="334"/>
        <end position="338"/>
    </location>
</feature>
<feature type="turn" evidence="11">
    <location>
        <begin position="339"/>
        <end position="341"/>
    </location>
</feature>
<feature type="helix" evidence="11">
    <location>
        <begin position="343"/>
        <end position="359"/>
    </location>
</feature>
<feature type="helix" evidence="11">
    <location>
        <begin position="363"/>
        <end position="375"/>
    </location>
</feature>
<feature type="helix" evidence="11">
    <location>
        <begin position="385"/>
        <end position="406"/>
    </location>
</feature>
<feature type="helix" evidence="11">
    <location>
        <begin position="413"/>
        <end position="418"/>
    </location>
</feature>
<feature type="helix" evidence="11">
    <location>
        <begin position="421"/>
        <end position="440"/>
    </location>
</feature>
<feature type="helix" evidence="12">
    <location>
        <begin position="448"/>
        <end position="455"/>
    </location>
</feature>
<accession>P62509</accession>
<accession>O75454</accession>
<accession>O96021</accession>
<accession>Q8CHC9</accession>
<accession>Q9R1F3</accession>
<evidence type="ECO:0000250" key="1"/>
<evidence type="ECO:0000255" key="2">
    <source>
        <dbReference type="PROSITE-ProRule" id="PRU00407"/>
    </source>
</evidence>
<evidence type="ECO:0000255" key="3">
    <source>
        <dbReference type="PROSITE-ProRule" id="PRU01189"/>
    </source>
</evidence>
<evidence type="ECO:0000256" key="4">
    <source>
        <dbReference type="SAM" id="MobiDB-lite"/>
    </source>
</evidence>
<evidence type="ECO:0000269" key="5">
    <source>
    </source>
</evidence>
<evidence type="ECO:0000269" key="6">
    <source>
    </source>
</evidence>
<evidence type="ECO:0000269" key="7">
    <source>
    </source>
</evidence>
<evidence type="ECO:0000303" key="8">
    <source>
    </source>
</evidence>
<evidence type="ECO:0000303" key="9">
    <source>
    </source>
</evidence>
<evidence type="ECO:0000305" key="10"/>
<evidence type="ECO:0007829" key="11">
    <source>
        <dbReference type="PDB" id="1S9P"/>
    </source>
</evidence>
<evidence type="ECO:0007829" key="12">
    <source>
        <dbReference type="PDB" id="1S9Q"/>
    </source>
</evidence>
<sequence length="458" mass="51306">MDSVELCLPESFSLHYEEELLCRMSNKDRHIDSSCSSFIKTEPSSPASLTDSVNHHSPGGSSDASGSYSSTMNGHQNGLDSPPLYPSAPILGGSGPVRKLYDDCSSTIVEDPQTKCEYMLNSMPKRLCLVCGDIASGYHYGVASCEACKAFFKRTIQGNIEYSCPATNECEITKRRRKSCQACRFMKCLKVGMLKEGVRLDRVRGGRQKYKRRIDAENSPYLNPQLVQPAKKPYNKIVSHLLVAEPEKIYAMPDPTVPDSDIKALTTLCDLADRELVVIIGWAKHIPGFSTLSLADQMSLLQSAWMEILILGVVYRSLSFEDELVYADDYIMDEDQSKLAGLLDLNNAILQLVKKYKSMKLEKEEFVTLKAIALANSDSMHIEDVEAVQKLQDVLHEALQDYEAGQHMEDPRRAGKMLMTLPLLRQTSTKAVQHFYNIKLEGKVPMHKLFLEMLEAKV</sequence>
<name>ERR3_MOUSE</name>
<reference key="1">
    <citation type="journal article" date="1999" name="J. Biol. Chem.">
        <title>Hormone-independent transcriptional activation and coactivator binding by novel orphan nuclear receptor ERR3.</title>
        <authorList>
            <person name="Hong H."/>
            <person name="Yang L."/>
            <person name="Stallcup M.R."/>
        </authorList>
    </citation>
    <scope>NUCLEOTIDE SEQUENCE [MRNA] (ISOFORM 1)</scope>
    <scope>INTERACTION WITH GRIP1</scope>
    <scope>MUTAGENESIS OF LEU-449; PHE-450; MET-453 AND LEU-454</scope>
    <scope>FUNCTION</scope>
    <scope>TISSUE SPECIFICITY</scope>
</reference>
<reference key="2">
    <citation type="journal article" date="2002" name="DNA Res.">
        <title>Prediction of the coding sequences of mouse homologues of KIAA gene: I. The complete nucleotide sequences of 100 mouse KIAA-homologous cDNAs identified by screening of terminal sequences of cDNA clones randomly sampled from size-fractionated libraries.</title>
        <authorList>
            <person name="Okazaki N."/>
            <person name="Kikuno R."/>
            <person name="Ohara R."/>
            <person name="Inamoto S."/>
            <person name="Hara Y."/>
            <person name="Nagase T."/>
            <person name="Ohara O."/>
            <person name="Koga H."/>
        </authorList>
    </citation>
    <scope>NUCLEOTIDE SEQUENCE [LARGE SCALE MRNA] (ISOFORM 2)</scope>
    <source>
        <tissue>Brain</tissue>
    </source>
</reference>
<reference key="3">
    <citation type="journal article" date="2005" name="Science">
        <title>The transcriptional landscape of the mammalian genome.</title>
        <authorList>
            <person name="Carninci P."/>
            <person name="Kasukawa T."/>
            <person name="Katayama S."/>
            <person name="Gough J."/>
            <person name="Frith M.C."/>
            <person name="Maeda N."/>
            <person name="Oyama R."/>
            <person name="Ravasi T."/>
            <person name="Lenhard B."/>
            <person name="Wells C."/>
            <person name="Kodzius R."/>
            <person name="Shimokawa K."/>
            <person name="Bajic V.B."/>
            <person name="Brenner S.E."/>
            <person name="Batalov S."/>
            <person name="Forrest A.R."/>
            <person name="Zavolan M."/>
            <person name="Davis M.J."/>
            <person name="Wilming L.G."/>
            <person name="Aidinis V."/>
            <person name="Allen J.E."/>
            <person name="Ambesi-Impiombato A."/>
            <person name="Apweiler R."/>
            <person name="Aturaliya R.N."/>
            <person name="Bailey T.L."/>
            <person name="Bansal M."/>
            <person name="Baxter L."/>
            <person name="Beisel K.W."/>
            <person name="Bersano T."/>
            <person name="Bono H."/>
            <person name="Chalk A.M."/>
            <person name="Chiu K.P."/>
            <person name="Choudhary V."/>
            <person name="Christoffels A."/>
            <person name="Clutterbuck D.R."/>
            <person name="Crowe M.L."/>
            <person name="Dalla E."/>
            <person name="Dalrymple B.P."/>
            <person name="de Bono B."/>
            <person name="Della Gatta G."/>
            <person name="di Bernardo D."/>
            <person name="Down T."/>
            <person name="Engstrom P."/>
            <person name="Fagiolini M."/>
            <person name="Faulkner G."/>
            <person name="Fletcher C.F."/>
            <person name="Fukushima T."/>
            <person name="Furuno M."/>
            <person name="Futaki S."/>
            <person name="Gariboldi M."/>
            <person name="Georgii-Hemming P."/>
            <person name="Gingeras T.R."/>
            <person name="Gojobori T."/>
            <person name="Green R.E."/>
            <person name="Gustincich S."/>
            <person name="Harbers M."/>
            <person name="Hayashi Y."/>
            <person name="Hensch T.K."/>
            <person name="Hirokawa N."/>
            <person name="Hill D."/>
            <person name="Huminiecki L."/>
            <person name="Iacono M."/>
            <person name="Ikeo K."/>
            <person name="Iwama A."/>
            <person name="Ishikawa T."/>
            <person name="Jakt M."/>
            <person name="Kanapin A."/>
            <person name="Katoh M."/>
            <person name="Kawasawa Y."/>
            <person name="Kelso J."/>
            <person name="Kitamura H."/>
            <person name="Kitano H."/>
            <person name="Kollias G."/>
            <person name="Krishnan S.P."/>
            <person name="Kruger A."/>
            <person name="Kummerfeld S.K."/>
            <person name="Kurochkin I.V."/>
            <person name="Lareau L.F."/>
            <person name="Lazarevic D."/>
            <person name="Lipovich L."/>
            <person name="Liu J."/>
            <person name="Liuni S."/>
            <person name="McWilliam S."/>
            <person name="Madan Babu M."/>
            <person name="Madera M."/>
            <person name="Marchionni L."/>
            <person name="Matsuda H."/>
            <person name="Matsuzawa S."/>
            <person name="Miki H."/>
            <person name="Mignone F."/>
            <person name="Miyake S."/>
            <person name="Morris K."/>
            <person name="Mottagui-Tabar S."/>
            <person name="Mulder N."/>
            <person name="Nakano N."/>
            <person name="Nakauchi H."/>
            <person name="Ng P."/>
            <person name="Nilsson R."/>
            <person name="Nishiguchi S."/>
            <person name="Nishikawa S."/>
            <person name="Nori F."/>
            <person name="Ohara O."/>
            <person name="Okazaki Y."/>
            <person name="Orlando V."/>
            <person name="Pang K.C."/>
            <person name="Pavan W.J."/>
            <person name="Pavesi G."/>
            <person name="Pesole G."/>
            <person name="Petrovsky N."/>
            <person name="Piazza S."/>
            <person name="Reed J."/>
            <person name="Reid J.F."/>
            <person name="Ring B.Z."/>
            <person name="Ringwald M."/>
            <person name="Rost B."/>
            <person name="Ruan Y."/>
            <person name="Salzberg S.L."/>
            <person name="Sandelin A."/>
            <person name="Schneider C."/>
            <person name="Schoenbach C."/>
            <person name="Sekiguchi K."/>
            <person name="Semple C.A."/>
            <person name="Seno S."/>
            <person name="Sessa L."/>
            <person name="Sheng Y."/>
            <person name="Shibata Y."/>
            <person name="Shimada H."/>
            <person name="Shimada K."/>
            <person name="Silva D."/>
            <person name="Sinclair B."/>
            <person name="Sperling S."/>
            <person name="Stupka E."/>
            <person name="Sugiura K."/>
            <person name="Sultana R."/>
            <person name="Takenaka Y."/>
            <person name="Taki K."/>
            <person name="Tammoja K."/>
            <person name="Tan S.L."/>
            <person name="Tang S."/>
            <person name="Taylor M.S."/>
            <person name="Tegner J."/>
            <person name="Teichmann S.A."/>
            <person name="Ueda H.R."/>
            <person name="van Nimwegen E."/>
            <person name="Verardo R."/>
            <person name="Wei C.L."/>
            <person name="Yagi K."/>
            <person name="Yamanishi H."/>
            <person name="Zabarovsky E."/>
            <person name="Zhu S."/>
            <person name="Zimmer A."/>
            <person name="Hide W."/>
            <person name="Bult C."/>
            <person name="Grimmond S.M."/>
            <person name="Teasdale R.D."/>
            <person name="Liu E.T."/>
            <person name="Brusic V."/>
            <person name="Quackenbush J."/>
            <person name="Wahlestedt C."/>
            <person name="Mattick J.S."/>
            <person name="Hume D.A."/>
            <person name="Kai C."/>
            <person name="Sasaki D."/>
            <person name="Tomaru Y."/>
            <person name="Fukuda S."/>
            <person name="Kanamori-Katayama M."/>
            <person name="Suzuki M."/>
            <person name="Aoki J."/>
            <person name="Arakawa T."/>
            <person name="Iida J."/>
            <person name="Imamura K."/>
            <person name="Itoh M."/>
            <person name="Kato T."/>
            <person name="Kawaji H."/>
            <person name="Kawagashira N."/>
            <person name="Kawashima T."/>
            <person name="Kojima M."/>
            <person name="Kondo S."/>
            <person name="Konno H."/>
            <person name="Nakano K."/>
            <person name="Ninomiya N."/>
            <person name="Nishio T."/>
            <person name="Okada M."/>
            <person name="Plessy C."/>
            <person name="Shibata K."/>
            <person name="Shiraki T."/>
            <person name="Suzuki S."/>
            <person name="Tagami M."/>
            <person name="Waki K."/>
            <person name="Watahiki A."/>
            <person name="Okamura-Oho Y."/>
            <person name="Suzuki H."/>
            <person name="Kawai J."/>
            <person name="Hayashizaki Y."/>
        </authorList>
    </citation>
    <scope>NUCLEOTIDE SEQUENCE [LARGE SCALE MRNA] (ISOFORM 2)</scope>
    <source>
        <strain>C57BL/6J</strain>
        <tissue>Kidney</tissue>
    </source>
</reference>
<reference key="4">
    <citation type="journal article" date="2004" name="Genome Res.">
        <title>The status, quality, and expansion of the NIH full-length cDNA project: the Mammalian Gene Collection (MGC).</title>
        <authorList>
            <consortium name="The MGC Project Team"/>
        </authorList>
    </citation>
    <scope>NUCLEOTIDE SEQUENCE [LARGE SCALE MRNA] (ISOFORM 1)</scope>
    <source>
        <strain>C57BL/6J</strain>
        <tissue>Brain</tissue>
    </source>
</reference>
<reference key="5">
    <citation type="journal article" date="2010" name="Cell">
        <title>A tissue-specific atlas of mouse protein phosphorylation and expression.</title>
        <authorList>
            <person name="Huttlin E.L."/>
            <person name="Jedrychowski M.P."/>
            <person name="Elias J.E."/>
            <person name="Goswami T."/>
            <person name="Rad R."/>
            <person name="Beausoleil S.A."/>
            <person name="Villen J."/>
            <person name="Haas W."/>
            <person name="Sowa M.E."/>
            <person name="Gygi S.P."/>
        </authorList>
    </citation>
    <scope>IDENTIFICATION BY MASS SPECTROMETRY [LARGE SCALE ANALYSIS]</scope>
    <source>
        <tissue>Kidney</tissue>
    </source>
</reference>
<reference key="6">
    <citation type="journal article" date="2017" name="EMBO Mol. Med.">
        <title>GDF15 is a heart-derived hormone that regulates body growth.</title>
        <authorList>
            <person name="Wang T."/>
            <person name="Liu J."/>
            <person name="McDonald C."/>
            <person name="Lupino K."/>
            <person name="Zhai X."/>
            <person name="Wilkins B.J."/>
            <person name="Hakonarson H."/>
            <person name="Pei L."/>
        </authorList>
    </citation>
    <scope>DISRUPTION PHENOTYPE</scope>
</reference>
<reference key="7">
    <citation type="journal article" date="2004" name="J. Biol. Chem.">
        <title>Structural basis for the deactivation of the estrogen-related receptor gamma by diethylstilbestrol or 4-hydroxytamoxifen and determinants of selectivity.</title>
        <authorList>
            <person name="Greschik H."/>
            <person name="Flaig R."/>
            <person name="Renaud J.-P."/>
            <person name="Moras D."/>
        </authorList>
    </citation>
    <scope>X-RAY CRYSTALLOGRAPHY (2.1 ANGSTROMS) OF 229-458 IN COMPLEXES WITH INVERSE AGONISTS</scope>
    <scope>SUBUNIT</scope>
</reference>
<comment type="function">
    <text evidence="5">Orphan receptor that acts as a transcription activator in the absence of bound ligand. Binds specifically to an estrogen response element and activates reporter genes controlled by estrogen response elements. Induces the expression of PERM1 in the skeletal muscle.</text>
</comment>
<comment type="subunit">
    <text evidence="1 5 6">Homodimer. Interacts with NRIP1, NCOA1 and NCOR2 (By similarity). Binds TLE1, PNRC1 and PNRC2 (By similarity). Binds GRIP1.</text>
</comment>
<comment type="interaction">
    <interactant intactId="EBI-5274019">
        <id>P62509</id>
    </interactant>
    <interactant intactId="EBI-5274001">
        <id>Q91ZR3</id>
        <label>Crebzf</label>
    </interactant>
    <organismsDiffer>false</organismsDiffer>
    <experiments>3</experiments>
</comment>
<comment type="interaction">
    <interactant intactId="EBI-5274019">
        <id>P62509</id>
    </interactant>
    <interactant intactId="EBI-632965">
        <id>Q9NS37</id>
        <label>CREBZF</label>
    </interactant>
    <organismsDiffer>true</organismsDiffer>
    <experiments>3</experiments>
</comment>
<comment type="subcellular location">
    <subcellularLocation>
        <location evidence="10">Nucleus</location>
    </subcellularLocation>
</comment>
<comment type="alternative products">
    <event type="alternative splicing"/>
    <isoform>
        <id>P62509-1</id>
        <name>1</name>
        <name>Long</name>
        <sequence type="displayed"/>
    </isoform>
    <isoform>
        <id>P62509-2</id>
        <name>2</name>
        <name>Short</name>
        <sequence type="described" ref="VSP_010766"/>
    </isoform>
</comment>
<comment type="tissue specificity">
    <text evidence="5">Highly expressed in the heart, brain and kidney and low expression in the liver.</text>
</comment>
<comment type="PTM">
    <text evidence="1">Acetylated by PCAF/KAT2 (in vitro).</text>
</comment>
<comment type="PTM">
    <text evidence="1">Sumoylation on Lys-40 is enhanced by phosphorylation at Ser-45 and represses transcriptional activity.</text>
</comment>
<comment type="PTM">
    <text evidence="1">Phosphorylation on Ser-45 enhances sumoylation on Lys-40 thus repressing transcriptional activity.</text>
</comment>
<comment type="disruption phenotype">
    <text evidence="7">Cardiomyocyte-specific double konckout for ESRRA and ESRRG are slower at gaining weight, smaller and shorter from 5 to 7 days of age compared to controls. They show decreased absolute weight of most internal organs except the heart. They have about 70% decreased plasma IGF1 levels but normal plasma growth hormone levels. At 14-15 days, mutants develop lethal dilated cardiomyopathy and heart failure.</text>
</comment>
<comment type="miscellaneous">
    <text evidence="1">No physiological activating ligand is known for this orphan receptor, but 4-hydroxytamoxifen and diethylstilbestrol act as inverse agonists and deactivate ESRRG.</text>
</comment>
<comment type="similarity">
    <text evidence="10">Belongs to the nuclear hormone receptor family. NR3 subfamily.</text>
</comment>
<comment type="sequence caution" evidence="10">
    <conflict type="erroneous initiation">
        <sequence resource="EMBL-CDS" id="BAC41450"/>
    </conflict>
    <text>Extended N-terminus.</text>
</comment>
<dbReference type="EMBL" id="AF117254">
    <property type="protein sequence ID" value="AAD48369.1"/>
    <property type="molecule type" value="mRNA"/>
</dbReference>
<dbReference type="EMBL" id="AB093266">
    <property type="protein sequence ID" value="BAC41450.1"/>
    <property type="status" value="ALT_INIT"/>
    <property type="molecule type" value="mRNA"/>
</dbReference>
<dbReference type="EMBL" id="AK052731">
    <property type="protein sequence ID" value="BAC35120.1"/>
    <property type="molecule type" value="mRNA"/>
</dbReference>
<dbReference type="EMBL" id="BC082324">
    <property type="protein sequence ID" value="AAH82324.1"/>
    <property type="molecule type" value="mRNA"/>
</dbReference>
<dbReference type="CCDS" id="CCDS15606.1">
    <molecule id="P62509-1"/>
</dbReference>
<dbReference type="CCDS" id="CCDS56666.1">
    <molecule id="P62509-2"/>
</dbReference>
<dbReference type="RefSeq" id="NP_001230721.1">
    <molecule id="P62509-2"/>
    <property type="nucleotide sequence ID" value="NM_001243792.1"/>
</dbReference>
<dbReference type="RefSeq" id="NP_001344463.1">
    <molecule id="P62509-2"/>
    <property type="nucleotide sequence ID" value="NM_001357534.1"/>
</dbReference>
<dbReference type="RefSeq" id="NP_001344464.1">
    <molecule id="P62509-2"/>
    <property type="nucleotide sequence ID" value="NM_001357535.1"/>
</dbReference>
<dbReference type="RefSeq" id="NP_036065.1">
    <molecule id="P62509-1"/>
    <property type="nucleotide sequence ID" value="NM_011935.3"/>
</dbReference>
<dbReference type="RefSeq" id="XP_006497227.1">
    <property type="nucleotide sequence ID" value="XM_006497164.3"/>
</dbReference>
<dbReference type="RefSeq" id="XP_006497228.1">
    <molecule id="P62509-2"/>
    <property type="nucleotide sequence ID" value="XM_006497165.5"/>
</dbReference>
<dbReference type="RefSeq" id="XP_006497230.1">
    <property type="nucleotide sequence ID" value="XM_006497167.3"/>
</dbReference>
<dbReference type="RefSeq" id="XP_006497233.1">
    <molecule id="P62509-2"/>
    <property type="nucleotide sequence ID" value="XM_006497170.3"/>
</dbReference>
<dbReference type="RefSeq" id="XP_036021132.1">
    <molecule id="P62509-2"/>
    <property type="nucleotide sequence ID" value="XM_036165239.1"/>
</dbReference>
<dbReference type="RefSeq" id="XP_036021133.1">
    <molecule id="P62509-2"/>
    <property type="nucleotide sequence ID" value="XM_036165240.1"/>
</dbReference>
<dbReference type="RefSeq" id="XP_036021135.1">
    <molecule id="P62509-2"/>
    <property type="nucleotide sequence ID" value="XM_036165242.1"/>
</dbReference>
<dbReference type="RefSeq" id="XP_036021140.1">
    <molecule id="P62509-2"/>
    <property type="nucleotide sequence ID" value="XM_036165247.1"/>
</dbReference>
<dbReference type="RefSeq" id="XP_036021143.1">
    <molecule id="P62509-2"/>
    <property type="nucleotide sequence ID" value="XM_036165250.1"/>
</dbReference>
<dbReference type="PDB" id="1S9P">
    <property type="method" value="X-ray"/>
    <property type="resolution" value="2.13 A"/>
    <property type="chains" value="A/B/C/D=232-458"/>
</dbReference>
<dbReference type="PDB" id="1S9Q">
    <property type="method" value="X-ray"/>
    <property type="resolution" value="2.20 A"/>
    <property type="chains" value="A/B=229-456"/>
</dbReference>
<dbReference type="PDBsum" id="1S9P"/>
<dbReference type="PDBsum" id="1S9Q"/>
<dbReference type="SMR" id="P62509"/>
<dbReference type="BioGRID" id="204939">
    <property type="interactions" value="4"/>
</dbReference>
<dbReference type="FunCoup" id="P62509">
    <property type="interactions" value="1642"/>
</dbReference>
<dbReference type="IntAct" id="P62509">
    <property type="interactions" value="8"/>
</dbReference>
<dbReference type="STRING" id="10090.ENSMUSP00000027906"/>
<dbReference type="ChEMBL" id="CHEMBL3585238"/>
<dbReference type="GlyGen" id="P62509">
    <property type="glycosylation" value="3 sites, 1 O-linked glycan (2 sites)"/>
</dbReference>
<dbReference type="iPTMnet" id="P62509"/>
<dbReference type="PhosphoSitePlus" id="P62509"/>
<dbReference type="PaxDb" id="10090-ENSMUSP00000027906"/>
<dbReference type="PeptideAtlas" id="P62509"/>
<dbReference type="ProteomicsDB" id="275945">
    <molecule id="P62509-1"/>
</dbReference>
<dbReference type="ProteomicsDB" id="275946">
    <molecule id="P62509-2"/>
</dbReference>
<dbReference type="Antibodypedia" id="20728">
    <property type="antibodies" value="516 antibodies from 37 providers"/>
</dbReference>
<dbReference type="DNASU" id="26381"/>
<dbReference type="Ensembl" id="ENSMUST00000027906.13">
    <molecule id="P62509-1"/>
    <property type="protein sequence ID" value="ENSMUSP00000027906.7"/>
    <property type="gene ID" value="ENSMUSG00000026610.14"/>
</dbReference>
<dbReference type="Ensembl" id="ENSMUST00000110938.2">
    <molecule id="P62509-2"/>
    <property type="protein sequence ID" value="ENSMUSP00000106563.2"/>
    <property type="gene ID" value="ENSMUSG00000026610.14"/>
</dbReference>
<dbReference type="Ensembl" id="ENSMUST00000110939.8">
    <molecule id="P62509-2"/>
    <property type="protein sequence ID" value="ENSMUSP00000106564.2"/>
    <property type="gene ID" value="ENSMUSG00000026610.14"/>
</dbReference>
<dbReference type="GeneID" id="26381"/>
<dbReference type="KEGG" id="mmu:26381"/>
<dbReference type="UCSC" id="uc007eaa.2">
    <molecule id="P62509-1"/>
    <property type="organism name" value="mouse"/>
</dbReference>
<dbReference type="AGR" id="MGI:1347056"/>
<dbReference type="CTD" id="2104"/>
<dbReference type="MGI" id="MGI:1347056">
    <property type="gene designation" value="Esrrg"/>
</dbReference>
<dbReference type="VEuPathDB" id="HostDB:ENSMUSG00000026610"/>
<dbReference type="eggNOG" id="KOG3575">
    <property type="taxonomic scope" value="Eukaryota"/>
</dbReference>
<dbReference type="GeneTree" id="ENSGT00940000153433"/>
<dbReference type="HOGENOM" id="CLU_007368_11_0_1"/>
<dbReference type="InParanoid" id="P62509"/>
<dbReference type="OMA" id="KYRTMKL"/>
<dbReference type="OrthoDB" id="5799427at2759"/>
<dbReference type="PhylomeDB" id="P62509"/>
<dbReference type="TreeFam" id="TF323751"/>
<dbReference type="Reactome" id="R-MMU-383280">
    <property type="pathway name" value="Nuclear Receptor transcription pathway"/>
</dbReference>
<dbReference type="BioGRID-ORCS" id="26381">
    <property type="hits" value="4 hits in 78 CRISPR screens"/>
</dbReference>
<dbReference type="ChiTaRS" id="Esrrg">
    <property type="organism name" value="mouse"/>
</dbReference>
<dbReference type="EvolutionaryTrace" id="P62509"/>
<dbReference type="PRO" id="PR:P62509"/>
<dbReference type="Proteomes" id="UP000000589">
    <property type="component" value="Chromosome 1"/>
</dbReference>
<dbReference type="RNAct" id="P62509">
    <property type="molecule type" value="protein"/>
</dbReference>
<dbReference type="Bgee" id="ENSMUSG00000026610">
    <property type="expression patterns" value="Expressed in pontine nuclear group and 210 other cell types or tissues"/>
</dbReference>
<dbReference type="ExpressionAtlas" id="P62509">
    <property type="expression patterns" value="baseline and differential"/>
</dbReference>
<dbReference type="GO" id="GO:0005634">
    <property type="term" value="C:nucleus"/>
    <property type="evidence" value="ECO:0000303"/>
    <property type="project" value="UniProtKB"/>
</dbReference>
<dbReference type="GO" id="GO:0005516">
    <property type="term" value="F:calmodulin binding"/>
    <property type="evidence" value="ECO:0000303"/>
    <property type="project" value="UniProtKB"/>
</dbReference>
<dbReference type="GO" id="GO:0003677">
    <property type="term" value="F:DNA binding"/>
    <property type="evidence" value="ECO:0000303"/>
    <property type="project" value="UniProtKB"/>
</dbReference>
<dbReference type="GO" id="GO:0001228">
    <property type="term" value="F:DNA-binding transcription activator activity, RNA polymerase II-specific"/>
    <property type="evidence" value="ECO:0000314"/>
    <property type="project" value="UniProtKB"/>
</dbReference>
<dbReference type="GO" id="GO:0034056">
    <property type="term" value="F:estrogen response element binding"/>
    <property type="evidence" value="ECO:0000314"/>
    <property type="project" value="UniProtKB"/>
</dbReference>
<dbReference type="GO" id="GO:0004879">
    <property type="term" value="F:nuclear receptor activity"/>
    <property type="evidence" value="ECO:0000303"/>
    <property type="project" value="UniProtKB"/>
</dbReference>
<dbReference type="GO" id="GO:0003707">
    <property type="term" value="F:nuclear steroid receptor activity"/>
    <property type="evidence" value="ECO:0007669"/>
    <property type="project" value="InterPro"/>
</dbReference>
<dbReference type="GO" id="GO:0000977">
    <property type="term" value="F:RNA polymerase II transcription regulatory region sequence-specific DNA binding"/>
    <property type="evidence" value="ECO:0000314"/>
    <property type="project" value="NTNU_SB"/>
</dbReference>
<dbReference type="GO" id="GO:0005496">
    <property type="term" value="F:steroid binding"/>
    <property type="evidence" value="ECO:0007669"/>
    <property type="project" value="InterPro"/>
</dbReference>
<dbReference type="GO" id="GO:0008270">
    <property type="term" value="F:zinc ion binding"/>
    <property type="evidence" value="ECO:0007669"/>
    <property type="project" value="UniProtKB-KW"/>
</dbReference>
<dbReference type="GO" id="GO:0120162">
    <property type="term" value="P:positive regulation of cold-induced thermogenesis"/>
    <property type="evidence" value="ECO:0000315"/>
    <property type="project" value="YuBioLab"/>
</dbReference>
<dbReference type="GO" id="GO:0045893">
    <property type="term" value="P:positive regulation of DNA-templated transcription"/>
    <property type="evidence" value="ECO:0000314"/>
    <property type="project" value="UniProtKB"/>
</dbReference>
<dbReference type="GO" id="GO:0045944">
    <property type="term" value="P:positive regulation of transcription by RNA polymerase II"/>
    <property type="evidence" value="ECO:0000314"/>
    <property type="project" value="UniProtKB"/>
</dbReference>
<dbReference type="GO" id="GO:0006355">
    <property type="term" value="P:regulation of DNA-templated transcription"/>
    <property type="evidence" value="ECO:0000250"/>
    <property type="project" value="UniProtKB"/>
</dbReference>
<dbReference type="GO" id="GO:0048384">
    <property type="term" value="P:retinoic acid receptor signaling pathway"/>
    <property type="evidence" value="ECO:0007669"/>
    <property type="project" value="InterPro"/>
</dbReference>
<dbReference type="CDD" id="cd07170">
    <property type="entry name" value="NR_DBD_ERR"/>
    <property type="match status" value="1"/>
</dbReference>
<dbReference type="CDD" id="cd06946">
    <property type="entry name" value="NR_LBD_ERR"/>
    <property type="match status" value="1"/>
</dbReference>
<dbReference type="FunFam" id="1.10.565.10:FF:000009">
    <property type="entry name" value="estrogen-related receptor gamma isoform X1"/>
    <property type="match status" value="1"/>
</dbReference>
<dbReference type="FunFam" id="3.30.50.10:FF:000008">
    <property type="entry name" value="estrogen-related receptor gamma isoform X1"/>
    <property type="match status" value="1"/>
</dbReference>
<dbReference type="Gene3D" id="3.30.50.10">
    <property type="entry name" value="Erythroid Transcription Factor GATA-1, subunit A"/>
    <property type="match status" value="1"/>
</dbReference>
<dbReference type="Gene3D" id="1.10.565.10">
    <property type="entry name" value="Retinoid X Receptor"/>
    <property type="match status" value="1"/>
</dbReference>
<dbReference type="InterPro" id="IPR024178">
    <property type="entry name" value="Est_rcpt/est-rel_rcp"/>
</dbReference>
<dbReference type="InterPro" id="IPR035500">
    <property type="entry name" value="NHR-like_dom_sf"/>
</dbReference>
<dbReference type="InterPro" id="IPR000536">
    <property type="entry name" value="Nucl_hrmn_rcpt_lig-bd"/>
</dbReference>
<dbReference type="InterPro" id="IPR050200">
    <property type="entry name" value="Nuclear_hormone_rcpt_NR3"/>
</dbReference>
<dbReference type="InterPro" id="IPR001723">
    <property type="entry name" value="Nuclear_hrmn_rcpt"/>
</dbReference>
<dbReference type="InterPro" id="IPR027289">
    <property type="entry name" value="Oest-rel_rcp"/>
</dbReference>
<dbReference type="InterPro" id="IPR003078">
    <property type="entry name" value="Retinoic_acid_rcpt"/>
</dbReference>
<dbReference type="InterPro" id="IPR001628">
    <property type="entry name" value="Znf_hrmn_rcpt"/>
</dbReference>
<dbReference type="InterPro" id="IPR013088">
    <property type="entry name" value="Znf_NHR/GATA"/>
</dbReference>
<dbReference type="PANTHER" id="PTHR48092">
    <property type="entry name" value="KNIRPS-RELATED PROTEIN-RELATED"/>
    <property type="match status" value="1"/>
</dbReference>
<dbReference type="Pfam" id="PF00104">
    <property type="entry name" value="Hormone_recep"/>
    <property type="match status" value="1"/>
</dbReference>
<dbReference type="Pfam" id="PF00105">
    <property type="entry name" value="zf-C4"/>
    <property type="match status" value="1"/>
</dbReference>
<dbReference type="PIRSF" id="PIRSF002527">
    <property type="entry name" value="ER-like_NR"/>
    <property type="match status" value="1"/>
</dbReference>
<dbReference type="PIRSF" id="PIRSF500939">
    <property type="entry name" value="ERR1-2-3"/>
    <property type="match status" value="1"/>
</dbReference>
<dbReference type="PRINTS" id="PR01292">
    <property type="entry name" value="RETNOICACIDR"/>
</dbReference>
<dbReference type="PRINTS" id="PR00398">
    <property type="entry name" value="STRDHORMONER"/>
</dbReference>
<dbReference type="PRINTS" id="PR00047">
    <property type="entry name" value="STROIDFINGER"/>
</dbReference>
<dbReference type="SMART" id="SM00430">
    <property type="entry name" value="HOLI"/>
    <property type="match status" value="1"/>
</dbReference>
<dbReference type="SMART" id="SM00399">
    <property type="entry name" value="ZnF_C4"/>
    <property type="match status" value="1"/>
</dbReference>
<dbReference type="SUPFAM" id="SSF57716">
    <property type="entry name" value="Glucocorticoid receptor-like (DNA-binding domain)"/>
    <property type="match status" value="1"/>
</dbReference>
<dbReference type="SUPFAM" id="SSF48508">
    <property type="entry name" value="Nuclear receptor ligand-binding domain"/>
    <property type="match status" value="1"/>
</dbReference>
<dbReference type="PROSITE" id="PS51843">
    <property type="entry name" value="NR_LBD"/>
    <property type="match status" value="1"/>
</dbReference>
<dbReference type="PROSITE" id="PS00031">
    <property type="entry name" value="NUCLEAR_REC_DBD_1"/>
    <property type="match status" value="1"/>
</dbReference>
<dbReference type="PROSITE" id="PS51030">
    <property type="entry name" value="NUCLEAR_REC_DBD_2"/>
    <property type="match status" value="1"/>
</dbReference>